<proteinExistence type="evidence at transcript level"/>
<reference key="1">
    <citation type="journal article" date="2002" name="Nature">
        <title>The genome sequence and structure of rice chromosome 1.</title>
        <authorList>
            <person name="Sasaki T."/>
            <person name="Matsumoto T."/>
            <person name="Yamamoto K."/>
            <person name="Sakata K."/>
            <person name="Baba T."/>
            <person name="Katayose Y."/>
            <person name="Wu J."/>
            <person name="Niimura Y."/>
            <person name="Cheng Z."/>
            <person name="Nagamura Y."/>
            <person name="Antonio B.A."/>
            <person name="Kanamori H."/>
            <person name="Hosokawa S."/>
            <person name="Masukawa M."/>
            <person name="Arikawa K."/>
            <person name="Chiden Y."/>
            <person name="Hayashi M."/>
            <person name="Okamoto M."/>
            <person name="Ando T."/>
            <person name="Aoki H."/>
            <person name="Arita K."/>
            <person name="Hamada M."/>
            <person name="Harada C."/>
            <person name="Hijishita S."/>
            <person name="Honda M."/>
            <person name="Ichikawa Y."/>
            <person name="Idonuma A."/>
            <person name="Iijima M."/>
            <person name="Ikeda M."/>
            <person name="Ikeno M."/>
            <person name="Ito S."/>
            <person name="Ito T."/>
            <person name="Ito Y."/>
            <person name="Ito Y."/>
            <person name="Iwabuchi A."/>
            <person name="Kamiya K."/>
            <person name="Karasawa W."/>
            <person name="Katagiri S."/>
            <person name="Kikuta A."/>
            <person name="Kobayashi N."/>
            <person name="Kono I."/>
            <person name="Machita K."/>
            <person name="Maehara T."/>
            <person name="Mizuno H."/>
            <person name="Mizubayashi T."/>
            <person name="Mukai Y."/>
            <person name="Nagasaki H."/>
            <person name="Nakashima M."/>
            <person name="Nakama Y."/>
            <person name="Nakamichi Y."/>
            <person name="Nakamura M."/>
            <person name="Namiki N."/>
            <person name="Negishi M."/>
            <person name="Ohta I."/>
            <person name="Ono N."/>
            <person name="Saji S."/>
            <person name="Sakai K."/>
            <person name="Shibata M."/>
            <person name="Shimokawa T."/>
            <person name="Shomura A."/>
            <person name="Song J."/>
            <person name="Takazaki Y."/>
            <person name="Terasawa K."/>
            <person name="Tsuji K."/>
            <person name="Waki K."/>
            <person name="Yamagata H."/>
            <person name="Yamane H."/>
            <person name="Yoshiki S."/>
            <person name="Yoshihara R."/>
            <person name="Yukawa K."/>
            <person name="Zhong H."/>
            <person name="Iwama H."/>
            <person name="Endo T."/>
            <person name="Ito H."/>
            <person name="Hahn J.H."/>
            <person name="Kim H.-I."/>
            <person name="Eun M.-Y."/>
            <person name="Yano M."/>
            <person name="Jiang J."/>
            <person name="Gojobori T."/>
        </authorList>
    </citation>
    <scope>NUCLEOTIDE SEQUENCE [LARGE SCALE GENOMIC DNA]</scope>
    <source>
        <strain>cv. Nipponbare</strain>
    </source>
</reference>
<reference key="2">
    <citation type="journal article" date="2005" name="Nature">
        <title>The map-based sequence of the rice genome.</title>
        <authorList>
            <consortium name="International rice genome sequencing project (IRGSP)"/>
        </authorList>
    </citation>
    <scope>NUCLEOTIDE SEQUENCE [LARGE SCALE GENOMIC DNA]</scope>
    <source>
        <strain>cv. Nipponbare</strain>
    </source>
</reference>
<reference key="3">
    <citation type="journal article" date="2008" name="Nucleic Acids Res.">
        <title>The rice annotation project database (RAP-DB): 2008 update.</title>
        <authorList>
            <consortium name="The rice annotation project (RAP)"/>
        </authorList>
    </citation>
    <scope>GENOME REANNOTATION</scope>
    <source>
        <strain>cv. Nipponbare</strain>
    </source>
</reference>
<reference key="4">
    <citation type="journal article" date="2013" name="Rice">
        <title>Improvement of the Oryza sativa Nipponbare reference genome using next generation sequence and optical map data.</title>
        <authorList>
            <person name="Kawahara Y."/>
            <person name="de la Bastide M."/>
            <person name="Hamilton J.P."/>
            <person name="Kanamori H."/>
            <person name="McCombie W.R."/>
            <person name="Ouyang S."/>
            <person name="Schwartz D.C."/>
            <person name="Tanaka T."/>
            <person name="Wu J."/>
            <person name="Zhou S."/>
            <person name="Childs K.L."/>
            <person name="Davidson R.M."/>
            <person name="Lin H."/>
            <person name="Quesada-Ocampo L."/>
            <person name="Vaillancourt B."/>
            <person name="Sakai H."/>
            <person name="Lee S.S."/>
            <person name="Kim J."/>
            <person name="Numa H."/>
            <person name="Itoh T."/>
            <person name="Buell C.R."/>
            <person name="Matsumoto T."/>
        </authorList>
    </citation>
    <scope>GENOME REANNOTATION</scope>
    <source>
        <strain>cv. Nipponbare</strain>
    </source>
</reference>
<reference key="5">
    <citation type="journal article" date="2005" name="PLoS Biol.">
        <title>The genomes of Oryza sativa: a history of duplications.</title>
        <authorList>
            <person name="Yu J."/>
            <person name="Wang J."/>
            <person name="Lin W."/>
            <person name="Li S."/>
            <person name="Li H."/>
            <person name="Zhou J."/>
            <person name="Ni P."/>
            <person name="Dong W."/>
            <person name="Hu S."/>
            <person name="Zeng C."/>
            <person name="Zhang J."/>
            <person name="Zhang Y."/>
            <person name="Li R."/>
            <person name="Xu Z."/>
            <person name="Li S."/>
            <person name="Li X."/>
            <person name="Zheng H."/>
            <person name="Cong L."/>
            <person name="Lin L."/>
            <person name="Yin J."/>
            <person name="Geng J."/>
            <person name="Li G."/>
            <person name="Shi J."/>
            <person name="Liu J."/>
            <person name="Lv H."/>
            <person name="Li J."/>
            <person name="Wang J."/>
            <person name="Deng Y."/>
            <person name="Ran L."/>
            <person name="Shi X."/>
            <person name="Wang X."/>
            <person name="Wu Q."/>
            <person name="Li C."/>
            <person name="Ren X."/>
            <person name="Wang J."/>
            <person name="Wang X."/>
            <person name="Li D."/>
            <person name="Liu D."/>
            <person name="Zhang X."/>
            <person name="Ji Z."/>
            <person name="Zhao W."/>
            <person name="Sun Y."/>
            <person name="Zhang Z."/>
            <person name="Bao J."/>
            <person name="Han Y."/>
            <person name="Dong L."/>
            <person name="Ji J."/>
            <person name="Chen P."/>
            <person name="Wu S."/>
            <person name="Liu J."/>
            <person name="Xiao Y."/>
            <person name="Bu D."/>
            <person name="Tan J."/>
            <person name="Yang L."/>
            <person name="Ye C."/>
            <person name="Zhang J."/>
            <person name="Xu J."/>
            <person name="Zhou Y."/>
            <person name="Yu Y."/>
            <person name="Zhang B."/>
            <person name="Zhuang S."/>
            <person name="Wei H."/>
            <person name="Liu B."/>
            <person name="Lei M."/>
            <person name="Yu H."/>
            <person name="Li Y."/>
            <person name="Xu H."/>
            <person name="Wei S."/>
            <person name="He X."/>
            <person name="Fang L."/>
            <person name="Zhang Z."/>
            <person name="Zhang Y."/>
            <person name="Huang X."/>
            <person name="Su Z."/>
            <person name="Tong W."/>
            <person name="Li J."/>
            <person name="Tong Z."/>
            <person name="Li S."/>
            <person name="Ye J."/>
            <person name="Wang L."/>
            <person name="Fang L."/>
            <person name="Lei T."/>
            <person name="Chen C.-S."/>
            <person name="Chen H.-C."/>
            <person name="Xu Z."/>
            <person name="Li H."/>
            <person name="Huang H."/>
            <person name="Zhang F."/>
            <person name="Xu H."/>
            <person name="Li N."/>
            <person name="Zhao C."/>
            <person name="Li S."/>
            <person name="Dong L."/>
            <person name="Huang Y."/>
            <person name="Li L."/>
            <person name="Xi Y."/>
            <person name="Qi Q."/>
            <person name="Li W."/>
            <person name="Zhang B."/>
            <person name="Hu W."/>
            <person name="Zhang Y."/>
            <person name="Tian X."/>
            <person name="Jiao Y."/>
            <person name="Liang X."/>
            <person name="Jin J."/>
            <person name="Gao L."/>
            <person name="Zheng W."/>
            <person name="Hao B."/>
            <person name="Liu S.-M."/>
            <person name="Wang W."/>
            <person name="Yuan L."/>
            <person name="Cao M."/>
            <person name="McDermott J."/>
            <person name="Samudrala R."/>
            <person name="Wang J."/>
            <person name="Wong G.K.-S."/>
            <person name="Yang H."/>
        </authorList>
    </citation>
    <scope>NUCLEOTIDE SEQUENCE [LARGE SCALE GENOMIC DNA]</scope>
    <source>
        <strain>cv. Nipponbare</strain>
    </source>
</reference>
<reference key="6">
    <citation type="journal article" date="2003" name="Science">
        <title>Collection, mapping, and annotation of over 28,000 cDNA clones from japonica rice.</title>
        <authorList>
            <consortium name="The rice full-length cDNA consortium"/>
        </authorList>
    </citation>
    <scope>NUCLEOTIDE SEQUENCE [LARGE SCALE MRNA]</scope>
    <source>
        <strain>cv. Nipponbare</strain>
    </source>
</reference>
<reference key="7">
    <citation type="journal article" date="2006" name="J. Exp. Bot.">
        <title>Genome-wide analysis of plant glutaredoxin systems.</title>
        <authorList>
            <person name="Rouhier N."/>
            <person name="Couturier J."/>
            <person name="Jacquot J.-P."/>
        </authorList>
    </citation>
    <scope>GENE FAMILY</scope>
</reference>
<organism>
    <name type="scientific">Oryza sativa subsp. japonica</name>
    <name type="common">Rice</name>
    <dbReference type="NCBI Taxonomy" id="39947"/>
    <lineage>
        <taxon>Eukaryota</taxon>
        <taxon>Viridiplantae</taxon>
        <taxon>Streptophyta</taxon>
        <taxon>Embryophyta</taxon>
        <taxon>Tracheophyta</taxon>
        <taxon>Spermatophyta</taxon>
        <taxon>Magnoliopsida</taxon>
        <taxon>Liliopsida</taxon>
        <taxon>Poales</taxon>
        <taxon>Poaceae</taxon>
        <taxon>BOP clade</taxon>
        <taxon>Oryzoideae</taxon>
        <taxon>Oryzeae</taxon>
        <taxon>Oryzinae</taxon>
        <taxon>Oryza</taxon>
        <taxon>Oryza sativa</taxon>
    </lineage>
</organism>
<feature type="chain" id="PRO_0000271271" description="Monothiol glutaredoxin-S2">
    <location>
        <begin position="1"/>
        <end position="125"/>
    </location>
</feature>
<feature type="domain" description="Glutaredoxin" evidence="3">
    <location>
        <begin position="28"/>
        <end position="124"/>
    </location>
</feature>
<feature type="binding site" evidence="2">
    <location>
        <position position="48"/>
    </location>
    <ligand>
        <name>[2Fe-2S] cluster</name>
        <dbReference type="ChEBI" id="CHEBI:190135"/>
        <note>ligand shared between dimeric partners</note>
    </ligand>
</feature>
<protein>
    <recommendedName>
        <fullName>Monothiol glutaredoxin-S2</fullName>
    </recommendedName>
</protein>
<name>GRXS2_ORYSJ</name>
<comment type="function">
    <text evidence="4">May only reduce GSH-thiol disulfides, but not protein disulfides.</text>
</comment>
<comment type="subcellular location">
    <subcellularLocation>
        <location evidence="1">Cytoplasm</location>
    </subcellularLocation>
</comment>
<comment type="similarity">
    <text evidence="4">Belongs to the glutaredoxin family. CC-type subfamily.</text>
</comment>
<accession>Q5SMY5</accession>
<accession>A2ZQ87</accession>
<evidence type="ECO:0000250" key="1"/>
<evidence type="ECO:0000255" key="2"/>
<evidence type="ECO:0000255" key="3">
    <source>
        <dbReference type="PROSITE-ProRule" id="PRU00686"/>
    </source>
</evidence>
<evidence type="ECO:0000305" key="4"/>
<evidence type="ECO:0000312" key="5">
    <source>
        <dbReference type="EMBL" id="EAZ10884.1"/>
    </source>
</evidence>
<keyword id="KW-0001">2Fe-2S</keyword>
<keyword id="KW-0963">Cytoplasm</keyword>
<keyword id="KW-0408">Iron</keyword>
<keyword id="KW-0411">Iron-sulfur</keyword>
<keyword id="KW-0479">Metal-binding</keyword>
<keyword id="KW-0676">Redox-active center</keyword>
<keyword id="KW-1185">Reference proteome</keyword>
<dbReference type="EMBL" id="AP002537">
    <property type="protein sequence ID" value="BAD72201.1"/>
    <property type="molecule type" value="Genomic_DNA"/>
</dbReference>
<dbReference type="EMBL" id="AP003417">
    <property type="protein sequence ID" value="BAD72420.1"/>
    <property type="molecule type" value="Genomic_DNA"/>
</dbReference>
<dbReference type="EMBL" id="AP008207">
    <property type="protein sequence ID" value="BAF04201.1"/>
    <property type="molecule type" value="Genomic_DNA"/>
</dbReference>
<dbReference type="EMBL" id="AP014957">
    <property type="protein sequence ID" value="BAS70854.1"/>
    <property type="molecule type" value="Genomic_DNA"/>
</dbReference>
<dbReference type="EMBL" id="CM000138">
    <property type="protein sequence ID" value="EAZ10884.1"/>
    <property type="molecule type" value="Genomic_DNA"/>
</dbReference>
<dbReference type="EMBL" id="AK101203">
    <property type="protein sequence ID" value="BAG94954.1"/>
    <property type="molecule type" value="mRNA"/>
</dbReference>
<dbReference type="EMBL" id="AK102031">
    <property type="protein sequence ID" value="BAG95350.1"/>
    <property type="molecule type" value="mRNA"/>
</dbReference>
<dbReference type="RefSeq" id="XP_015631554.1">
    <property type="nucleotide sequence ID" value="XM_015776068.1"/>
</dbReference>
<dbReference type="SMR" id="Q5SMY5"/>
<dbReference type="FunCoup" id="Q5SMY5">
    <property type="interactions" value="46"/>
</dbReference>
<dbReference type="STRING" id="39947.Q5SMY5"/>
<dbReference type="PaxDb" id="39947-Q5SMY5"/>
<dbReference type="EnsemblPlants" id="Os01t0194600-02">
    <property type="protein sequence ID" value="Os01t0194600-02"/>
    <property type="gene ID" value="Os01g0194600"/>
</dbReference>
<dbReference type="Gramene" id="Os01t0194600-02">
    <property type="protein sequence ID" value="Os01t0194600-02"/>
    <property type="gene ID" value="Os01g0194600"/>
</dbReference>
<dbReference type="KEGG" id="dosa:Os01g0194600"/>
<dbReference type="eggNOG" id="KOG1752">
    <property type="taxonomic scope" value="Eukaryota"/>
</dbReference>
<dbReference type="HOGENOM" id="CLU_026126_6_2_1"/>
<dbReference type="InParanoid" id="Q5SMY5"/>
<dbReference type="OMA" id="FSRSACC"/>
<dbReference type="OrthoDB" id="418495at2759"/>
<dbReference type="Proteomes" id="UP000000763">
    <property type="component" value="Chromosome 1"/>
</dbReference>
<dbReference type="Proteomes" id="UP000007752">
    <property type="component" value="Chromosome 1"/>
</dbReference>
<dbReference type="Proteomes" id="UP000059680">
    <property type="component" value="Chromosome 1"/>
</dbReference>
<dbReference type="GO" id="GO:0005737">
    <property type="term" value="C:cytoplasm"/>
    <property type="evidence" value="ECO:0007669"/>
    <property type="project" value="UniProtKB-SubCell"/>
</dbReference>
<dbReference type="GO" id="GO:0051537">
    <property type="term" value="F:2 iron, 2 sulfur cluster binding"/>
    <property type="evidence" value="ECO:0007669"/>
    <property type="project" value="UniProtKB-KW"/>
</dbReference>
<dbReference type="GO" id="GO:0046872">
    <property type="term" value="F:metal ion binding"/>
    <property type="evidence" value="ECO:0007669"/>
    <property type="project" value="UniProtKB-KW"/>
</dbReference>
<dbReference type="Gene3D" id="3.40.30.10">
    <property type="entry name" value="Glutaredoxin"/>
    <property type="match status" value="1"/>
</dbReference>
<dbReference type="InterPro" id="IPR011905">
    <property type="entry name" value="GlrX-like_pln_2"/>
</dbReference>
<dbReference type="InterPro" id="IPR036249">
    <property type="entry name" value="Thioredoxin-like_sf"/>
</dbReference>
<dbReference type="NCBIfam" id="TIGR02189">
    <property type="entry name" value="GlrX-like_plant"/>
    <property type="match status" value="1"/>
</dbReference>
<dbReference type="PANTHER" id="PTHR10168">
    <property type="entry name" value="GLUTAREDOXIN"/>
    <property type="match status" value="1"/>
</dbReference>
<dbReference type="SUPFAM" id="SSF52833">
    <property type="entry name" value="Thioredoxin-like"/>
    <property type="match status" value="1"/>
</dbReference>
<dbReference type="PROSITE" id="PS51354">
    <property type="entry name" value="GLUTAREDOXIN_2"/>
    <property type="match status" value="1"/>
</dbReference>
<gene>
    <name type="primary">GRXS2</name>
    <name type="ordered locus">Os01g0194600</name>
    <name type="ordered locus">LOC_Os01g09830</name>
    <name evidence="5" type="ORF">OsJ_00727</name>
    <name type="ORF">P0001B06.21</name>
    <name type="ORF">P0498B01.7</name>
</gene>
<sequence length="125" mass="12799">MQAVAAAAGMMRRGSLTIDPAGEEEAPAERVGRLVRESPVVVFARRGCYMAHVMRRLLAAVGAHATVIELEGGAAEEEEAALGGGAALPALFVGGDPVGGLEGLMGLHLSGRLVPRLREVGALCT</sequence>